<evidence type="ECO:0000255" key="1">
    <source>
        <dbReference type="HAMAP-Rule" id="MF_00110"/>
    </source>
</evidence>
<feature type="chain" id="PRO_0000140790" description="3-dehydroquinate synthase">
    <location>
        <begin position="1"/>
        <end position="363"/>
    </location>
</feature>
<feature type="binding site" evidence="1">
    <location>
        <begin position="109"/>
        <end position="113"/>
    </location>
    <ligand>
        <name>NAD(+)</name>
        <dbReference type="ChEBI" id="CHEBI:57540"/>
    </ligand>
</feature>
<feature type="binding site" evidence="1">
    <location>
        <begin position="133"/>
        <end position="134"/>
    </location>
    <ligand>
        <name>NAD(+)</name>
        <dbReference type="ChEBI" id="CHEBI:57540"/>
    </ligand>
</feature>
<feature type="binding site" evidence="1">
    <location>
        <position position="146"/>
    </location>
    <ligand>
        <name>NAD(+)</name>
        <dbReference type="ChEBI" id="CHEBI:57540"/>
    </ligand>
</feature>
<feature type="binding site" evidence="1">
    <location>
        <position position="155"/>
    </location>
    <ligand>
        <name>NAD(+)</name>
        <dbReference type="ChEBI" id="CHEBI:57540"/>
    </ligand>
</feature>
<feature type="binding site" evidence="1">
    <location>
        <position position="188"/>
    </location>
    <ligand>
        <name>Zn(2+)</name>
        <dbReference type="ChEBI" id="CHEBI:29105"/>
    </ligand>
</feature>
<feature type="binding site" evidence="1">
    <location>
        <position position="251"/>
    </location>
    <ligand>
        <name>Zn(2+)</name>
        <dbReference type="ChEBI" id="CHEBI:29105"/>
    </ligand>
</feature>
<feature type="binding site" evidence="1">
    <location>
        <position position="267"/>
    </location>
    <ligand>
        <name>Zn(2+)</name>
        <dbReference type="ChEBI" id="CHEBI:29105"/>
    </ligand>
</feature>
<accession>Q9KXQ6</accession>
<name>AROB_STRCO</name>
<comment type="function">
    <text evidence="1">Catalyzes the conversion of 3-deoxy-D-arabino-heptulosonate 7-phosphate (DAHP) to dehydroquinate (DHQ).</text>
</comment>
<comment type="catalytic activity">
    <reaction evidence="1">
        <text>7-phospho-2-dehydro-3-deoxy-D-arabino-heptonate = 3-dehydroquinate + phosphate</text>
        <dbReference type="Rhea" id="RHEA:21968"/>
        <dbReference type="ChEBI" id="CHEBI:32364"/>
        <dbReference type="ChEBI" id="CHEBI:43474"/>
        <dbReference type="ChEBI" id="CHEBI:58394"/>
        <dbReference type="EC" id="4.2.3.4"/>
    </reaction>
</comment>
<comment type="cofactor">
    <cofactor evidence="1">
        <name>NAD(+)</name>
        <dbReference type="ChEBI" id="CHEBI:57540"/>
    </cofactor>
</comment>
<comment type="cofactor">
    <cofactor evidence="1">
        <name>Co(2+)</name>
        <dbReference type="ChEBI" id="CHEBI:48828"/>
    </cofactor>
    <cofactor evidence="1">
        <name>Zn(2+)</name>
        <dbReference type="ChEBI" id="CHEBI:29105"/>
    </cofactor>
    <text evidence="1">Binds 1 divalent metal cation per subunit. Can use either Co(2+) or Zn(2+).</text>
</comment>
<comment type="pathway">
    <text evidence="1">Metabolic intermediate biosynthesis; chorismate biosynthesis; chorismate from D-erythrose 4-phosphate and phosphoenolpyruvate: step 2/7.</text>
</comment>
<comment type="subcellular location">
    <subcellularLocation>
        <location evidence="1">Cytoplasm</location>
    </subcellularLocation>
</comment>
<comment type="similarity">
    <text evidence="1">Belongs to the sugar phosphate cyclases superfamily. Dehydroquinate synthase family.</text>
</comment>
<protein>
    <recommendedName>
        <fullName evidence="1">3-dehydroquinate synthase</fullName>
        <shortName evidence="1">DHQS</shortName>
        <ecNumber evidence="1">4.2.3.4</ecNumber>
    </recommendedName>
</protein>
<proteinExistence type="inferred from homology"/>
<sequence length="363" mass="38170">MSEAVTRIQVGGTAGSEPYEVLVGRQLLGELGGLIGAKAKRVAVIHPEALAETGDALRADLAAQGYEAIAIQVPNAEEAKTAEVAAYCWKALGQSGFTRTDVIVGVGGGASTDLAGFVAATWLRGVRWIAVPTTVLSMVDAAVGGKTGINTAEGKNLVGSFHPPAGVLCDLAALDSLPVNDYVSGLAEVIKAGFIADPAILDLIEADPQAARTPAGPHTAELIVRSIKVKAEVVSSDLKEAGLREILNYGHTLGHAIEKNERYKWRHGAAVSVGMHFAAELGRLAGRLDDATADRHRSILEAVGLPLHYRYDQWPKLVENMKVDKKSRGDLLRFIVLDGLAKPTVLEGPDPAVLLAAYGEVGE</sequence>
<dbReference type="EC" id="4.2.3.4" evidence="1"/>
<dbReference type="EMBL" id="AL939109">
    <property type="protein sequence ID" value="CAB93374.1"/>
    <property type="molecule type" value="Genomic_DNA"/>
</dbReference>
<dbReference type="RefSeq" id="NP_625774.1">
    <property type="nucleotide sequence ID" value="NC_003888.3"/>
</dbReference>
<dbReference type="RefSeq" id="WP_011027813.1">
    <property type="nucleotide sequence ID" value="NZ_VNID01000021.1"/>
</dbReference>
<dbReference type="SMR" id="Q9KXQ6"/>
<dbReference type="FunCoup" id="Q9KXQ6">
    <property type="interactions" value="350"/>
</dbReference>
<dbReference type="STRING" id="100226.gene:17759080"/>
<dbReference type="PaxDb" id="100226-SCO1494"/>
<dbReference type="KEGG" id="sco:SCO1494"/>
<dbReference type="PATRIC" id="fig|100226.15.peg.1503"/>
<dbReference type="eggNOG" id="COG0337">
    <property type="taxonomic scope" value="Bacteria"/>
</dbReference>
<dbReference type="HOGENOM" id="CLU_001201_0_3_11"/>
<dbReference type="InParanoid" id="Q9KXQ6"/>
<dbReference type="OrthoDB" id="9806583at2"/>
<dbReference type="PhylomeDB" id="Q9KXQ6"/>
<dbReference type="UniPathway" id="UPA00053">
    <property type="reaction ID" value="UER00085"/>
</dbReference>
<dbReference type="Proteomes" id="UP000001973">
    <property type="component" value="Chromosome"/>
</dbReference>
<dbReference type="GO" id="GO:0005737">
    <property type="term" value="C:cytoplasm"/>
    <property type="evidence" value="ECO:0007669"/>
    <property type="project" value="UniProtKB-SubCell"/>
</dbReference>
<dbReference type="GO" id="GO:0003856">
    <property type="term" value="F:3-dehydroquinate synthase activity"/>
    <property type="evidence" value="ECO:0000318"/>
    <property type="project" value="GO_Central"/>
</dbReference>
<dbReference type="GO" id="GO:0046872">
    <property type="term" value="F:metal ion binding"/>
    <property type="evidence" value="ECO:0007669"/>
    <property type="project" value="UniProtKB-KW"/>
</dbReference>
<dbReference type="GO" id="GO:0000166">
    <property type="term" value="F:nucleotide binding"/>
    <property type="evidence" value="ECO:0007669"/>
    <property type="project" value="UniProtKB-KW"/>
</dbReference>
<dbReference type="GO" id="GO:0008652">
    <property type="term" value="P:amino acid biosynthetic process"/>
    <property type="evidence" value="ECO:0007669"/>
    <property type="project" value="UniProtKB-KW"/>
</dbReference>
<dbReference type="GO" id="GO:0009073">
    <property type="term" value="P:aromatic amino acid family biosynthetic process"/>
    <property type="evidence" value="ECO:0000318"/>
    <property type="project" value="GO_Central"/>
</dbReference>
<dbReference type="GO" id="GO:0009423">
    <property type="term" value="P:chorismate biosynthetic process"/>
    <property type="evidence" value="ECO:0007669"/>
    <property type="project" value="UniProtKB-UniRule"/>
</dbReference>
<dbReference type="CDD" id="cd08195">
    <property type="entry name" value="DHQS"/>
    <property type="match status" value="1"/>
</dbReference>
<dbReference type="FunFam" id="1.20.1090.10:FF:000006">
    <property type="entry name" value="3-dehydroquinate synthase"/>
    <property type="match status" value="1"/>
</dbReference>
<dbReference type="FunFam" id="3.40.50.1970:FF:000012">
    <property type="entry name" value="3-dehydroquinate synthase"/>
    <property type="match status" value="1"/>
</dbReference>
<dbReference type="Gene3D" id="3.40.50.1970">
    <property type="match status" value="1"/>
</dbReference>
<dbReference type="Gene3D" id="1.20.1090.10">
    <property type="entry name" value="Dehydroquinate synthase-like - alpha domain"/>
    <property type="match status" value="1"/>
</dbReference>
<dbReference type="HAMAP" id="MF_00110">
    <property type="entry name" value="DHQ_synthase"/>
    <property type="match status" value="1"/>
</dbReference>
<dbReference type="InterPro" id="IPR050071">
    <property type="entry name" value="Dehydroquinate_synthase"/>
</dbReference>
<dbReference type="InterPro" id="IPR016037">
    <property type="entry name" value="DHQ_synth_AroB"/>
</dbReference>
<dbReference type="InterPro" id="IPR030963">
    <property type="entry name" value="DHQ_synth_fam"/>
</dbReference>
<dbReference type="InterPro" id="IPR030960">
    <property type="entry name" value="DHQS/DOIS_N"/>
</dbReference>
<dbReference type="InterPro" id="IPR056179">
    <property type="entry name" value="DHQS_C"/>
</dbReference>
<dbReference type="NCBIfam" id="TIGR01357">
    <property type="entry name" value="aroB"/>
    <property type="match status" value="1"/>
</dbReference>
<dbReference type="PANTHER" id="PTHR43622">
    <property type="entry name" value="3-DEHYDROQUINATE SYNTHASE"/>
    <property type="match status" value="1"/>
</dbReference>
<dbReference type="PANTHER" id="PTHR43622:SF7">
    <property type="entry name" value="3-DEHYDROQUINATE SYNTHASE, CHLOROPLASTIC"/>
    <property type="match status" value="1"/>
</dbReference>
<dbReference type="Pfam" id="PF01761">
    <property type="entry name" value="DHQ_synthase"/>
    <property type="match status" value="1"/>
</dbReference>
<dbReference type="Pfam" id="PF24621">
    <property type="entry name" value="DHQS_C"/>
    <property type="match status" value="1"/>
</dbReference>
<dbReference type="PIRSF" id="PIRSF001455">
    <property type="entry name" value="DHQ_synth"/>
    <property type="match status" value="1"/>
</dbReference>
<dbReference type="SUPFAM" id="SSF56796">
    <property type="entry name" value="Dehydroquinate synthase-like"/>
    <property type="match status" value="1"/>
</dbReference>
<reference key="1">
    <citation type="journal article" date="2002" name="Nature">
        <title>Complete genome sequence of the model actinomycete Streptomyces coelicolor A3(2).</title>
        <authorList>
            <person name="Bentley S.D."/>
            <person name="Chater K.F."/>
            <person name="Cerdeno-Tarraga A.-M."/>
            <person name="Challis G.L."/>
            <person name="Thomson N.R."/>
            <person name="James K.D."/>
            <person name="Harris D.E."/>
            <person name="Quail M.A."/>
            <person name="Kieser H."/>
            <person name="Harper D."/>
            <person name="Bateman A."/>
            <person name="Brown S."/>
            <person name="Chandra G."/>
            <person name="Chen C.W."/>
            <person name="Collins M."/>
            <person name="Cronin A."/>
            <person name="Fraser A."/>
            <person name="Goble A."/>
            <person name="Hidalgo J."/>
            <person name="Hornsby T."/>
            <person name="Howarth S."/>
            <person name="Huang C.-H."/>
            <person name="Kieser T."/>
            <person name="Larke L."/>
            <person name="Murphy L.D."/>
            <person name="Oliver K."/>
            <person name="O'Neil S."/>
            <person name="Rabbinowitsch E."/>
            <person name="Rajandream M.A."/>
            <person name="Rutherford K.M."/>
            <person name="Rutter S."/>
            <person name="Seeger K."/>
            <person name="Saunders D."/>
            <person name="Sharp S."/>
            <person name="Squares R."/>
            <person name="Squares S."/>
            <person name="Taylor K."/>
            <person name="Warren T."/>
            <person name="Wietzorrek A."/>
            <person name="Woodward J.R."/>
            <person name="Barrell B.G."/>
            <person name="Parkhill J."/>
            <person name="Hopwood D.A."/>
        </authorList>
    </citation>
    <scope>NUCLEOTIDE SEQUENCE [LARGE SCALE GENOMIC DNA]</scope>
    <source>
        <strain>ATCC BAA-471 / A3(2) / M145</strain>
    </source>
</reference>
<gene>
    <name evidence="1" type="primary">aroB</name>
    <name type="ordered locus">SCO1494</name>
    <name type="ORF">SC9C5.18c</name>
</gene>
<organism>
    <name type="scientific">Streptomyces coelicolor (strain ATCC BAA-471 / A3(2) / M145)</name>
    <dbReference type="NCBI Taxonomy" id="100226"/>
    <lineage>
        <taxon>Bacteria</taxon>
        <taxon>Bacillati</taxon>
        <taxon>Actinomycetota</taxon>
        <taxon>Actinomycetes</taxon>
        <taxon>Kitasatosporales</taxon>
        <taxon>Streptomycetaceae</taxon>
        <taxon>Streptomyces</taxon>
        <taxon>Streptomyces albidoflavus group</taxon>
    </lineage>
</organism>
<keyword id="KW-0028">Amino-acid biosynthesis</keyword>
<keyword id="KW-0057">Aromatic amino acid biosynthesis</keyword>
<keyword id="KW-0170">Cobalt</keyword>
<keyword id="KW-0963">Cytoplasm</keyword>
<keyword id="KW-0456">Lyase</keyword>
<keyword id="KW-0479">Metal-binding</keyword>
<keyword id="KW-0520">NAD</keyword>
<keyword id="KW-0547">Nucleotide-binding</keyword>
<keyword id="KW-1185">Reference proteome</keyword>
<keyword id="KW-0862">Zinc</keyword>